<accession>P0CM02</accession>
<accession>Q55JP2</accession>
<accession>Q5K9V9</accession>
<protein>
    <recommendedName>
        <fullName>Homoaconitase, mitochondrial</fullName>
        <ecNumber>4.2.1.36</ecNumber>
    </recommendedName>
    <alternativeName>
        <fullName>Homoaconitate hydratase</fullName>
    </alternativeName>
</protein>
<gene>
    <name type="primary">LYS4</name>
    <name type="ordered locus">CNK00580</name>
</gene>
<feature type="transit peptide" description="Mitochondrion" evidence="2">
    <location>
        <begin position="1"/>
        <end position="24"/>
    </location>
</feature>
<feature type="chain" id="PRO_0000247922" description="Homoaconitase, mitochondrial">
    <location>
        <begin position="25"/>
        <end position="728"/>
    </location>
</feature>
<feature type="binding site" evidence="1">
    <location>
        <position position="362"/>
    </location>
    <ligand>
        <name>[4Fe-4S] cluster</name>
        <dbReference type="ChEBI" id="CHEBI:49883"/>
    </ligand>
</feature>
<feature type="binding site" evidence="1">
    <location>
        <position position="422"/>
    </location>
    <ligand>
        <name>[4Fe-4S] cluster</name>
        <dbReference type="ChEBI" id="CHEBI:49883"/>
    </ligand>
</feature>
<feature type="binding site" evidence="1">
    <location>
        <position position="425"/>
    </location>
    <ligand>
        <name>[4Fe-4S] cluster</name>
        <dbReference type="ChEBI" id="CHEBI:49883"/>
    </ligand>
</feature>
<comment type="function">
    <text evidence="1">Catalyzes the reversible hydration of cis-homoaconitate to (2R,3S)-homoisocitrate, a step in the alpha-aminoadipate pathway for lysine biosynthesis.</text>
</comment>
<comment type="catalytic activity">
    <reaction>
        <text>(2R,3S)-homoisocitrate = cis-homoaconitate + H2O</text>
        <dbReference type="Rhea" id="RHEA:15485"/>
        <dbReference type="ChEBI" id="CHEBI:15377"/>
        <dbReference type="ChEBI" id="CHEBI:15404"/>
        <dbReference type="ChEBI" id="CHEBI:58174"/>
        <dbReference type="EC" id="4.2.1.36"/>
    </reaction>
</comment>
<comment type="cofactor">
    <cofactor evidence="1">
        <name>[4Fe-4S] cluster</name>
        <dbReference type="ChEBI" id="CHEBI:49883"/>
    </cofactor>
    <text evidence="1">Binds 1 [4Fe-4S] cluster per subunit.</text>
</comment>
<comment type="pathway">
    <text>Amino-acid biosynthesis; L-lysine biosynthesis via AAA pathway; L-alpha-aminoadipate from 2-oxoglutarate: step 3/5.</text>
</comment>
<comment type="subcellular location">
    <subcellularLocation>
        <location evidence="1">Mitochondrion</location>
    </subcellularLocation>
</comment>
<comment type="similarity">
    <text evidence="3">Belongs to the aconitase/IPM isomerase family.</text>
</comment>
<proteinExistence type="inferred from homology"/>
<keyword id="KW-0028">Amino-acid biosynthesis</keyword>
<keyword id="KW-0408">Iron</keyword>
<keyword id="KW-0411">Iron-sulfur</keyword>
<keyword id="KW-0456">Lyase</keyword>
<keyword id="KW-0457">Lysine biosynthesis</keyword>
<keyword id="KW-0479">Metal-binding</keyword>
<keyword id="KW-0496">Mitochondrion</keyword>
<keyword id="KW-1185">Reference proteome</keyword>
<keyword id="KW-0809">Transit peptide</keyword>
<name>LYS4_CRYNJ</name>
<sequence length="728" mass="77887">MVAIPRLARLSVPAWALSARGRFYATVSTPQTLVEKIVQKYAVGLSEGVKVRAGDYVMIKPEHVMTHDNTGPVISKFLSLSCSKLDNPRQPVFALDHDVQNQSETNQKKYKKIQAFAKEHGVDFYPAGRGIGHQIIVEEGYAWPGKMVVASDSHSNHYGGVGCLGTAIVRTDAAGIWATGKFWWQIPRIVSVSLDGRLSPGVTGKDVIVALAGLFNKDEVLNAAIEFTGSGVEHLSIDERLTIANMTTEWGAVAGVFPVDDKLKEWYQGILRKAELRKFISPTVPSTVGAKVHPRLNAARLDDAMTNRVVADPGAHYAARLSLDLSTLVPHVSGPNSVKVATALPKLLDPPIPINKAYLVSCTNSRASDIASAAQVLRGKKVAPGVEFYIAAASSRVQEDAEAAGDWQTLIDAGAKTLPAGCGPCIGLGVGLLEKGEVGISATNRNYKGRMGSPDAIAYLASPAVVAASAAKGVICGPESMDLSQLPQYEQPKFSIIEEGAAGEEKPVEVDEASLEPLLEGFPAYFEGPLLFAPQDNLTTDGMYPGKYTYQDDITPERQAEVVMENYDPTFAATARELRTALPTASSPSTLPGAILLSGYNFGTGSSREQAATAIKNAGIPLVICGSFGDIFKRNSINNGLILIESPSLIKDMTERFAKDGVRNKGGKDGKLTVVPEGWRIKVDSQRGLVTVNMGEEEEKTYPAAKVGRSVQELWVNGGLEGFIRASL</sequence>
<organism>
    <name type="scientific">Cryptococcus neoformans var. neoformans serotype D (strain JEC21 / ATCC MYA-565)</name>
    <name type="common">Filobasidiella neoformans</name>
    <dbReference type="NCBI Taxonomy" id="214684"/>
    <lineage>
        <taxon>Eukaryota</taxon>
        <taxon>Fungi</taxon>
        <taxon>Dikarya</taxon>
        <taxon>Basidiomycota</taxon>
        <taxon>Agaricomycotina</taxon>
        <taxon>Tremellomycetes</taxon>
        <taxon>Tremellales</taxon>
        <taxon>Cryptococcaceae</taxon>
        <taxon>Cryptococcus</taxon>
        <taxon>Cryptococcus neoformans species complex</taxon>
    </lineage>
</organism>
<evidence type="ECO:0000250" key="1"/>
<evidence type="ECO:0000255" key="2"/>
<evidence type="ECO:0000305" key="3"/>
<dbReference type="EC" id="4.2.1.36"/>
<dbReference type="EMBL" id="AE017351">
    <property type="protein sequence ID" value="AAW46105.1"/>
    <property type="molecule type" value="Genomic_DNA"/>
</dbReference>
<dbReference type="RefSeq" id="XP_567622.1">
    <property type="nucleotide sequence ID" value="XM_567622.1"/>
</dbReference>
<dbReference type="SMR" id="P0CM02"/>
<dbReference type="FunCoup" id="P0CM02">
    <property type="interactions" value="91"/>
</dbReference>
<dbReference type="STRING" id="214684.P0CM02"/>
<dbReference type="PaxDb" id="214684-P0CM02"/>
<dbReference type="EnsemblFungi" id="AAW46105">
    <property type="protein sequence ID" value="AAW46105"/>
    <property type="gene ID" value="CNK00580"/>
</dbReference>
<dbReference type="GeneID" id="3254569"/>
<dbReference type="KEGG" id="cne:CNK00580"/>
<dbReference type="VEuPathDB" id="FungiDB:CNK00580"/>
<dbReference type="eggNOG" id="KOG0453">
    <property type="taxonomic scope" value="Eukaryota"/>
</dbReference>
<dbReference type="HOGENOM" id="CLU_006714_3_1_1"/>
<dbReference type="InParanoid" id="P0CM02"/>
<dbReference type="OMA" id="LCDADNI"/>
<dbReference type="OrthoDB" id="10262323at2759"/>
<dbReference type="UniPathway" id="UPA00033">
    <property type="reaction ID" value="UER01027"/>
</dbReference>
<dbReference type="Proteomes" id="UP000002149">
    <property type="component" value="Chromosome 11"/>
</dbReference>
<dbReference type="GO" id="GO:0005759">
    <property type="term" value="C:mitochondrial matrix"/>
    <property type="evidence" value="ECO:0007669"/>
    <property type="project" value="EnsemblFungi"/>
</dbReference>
<dbReference type="GO" id="GO:0051539">
    <property type="term" value="F:4 iron, 4 sulfur cluster binding"/>
    <property type="evidence" value="ECO:0007669"/>
    <property type="project" value="InterPro"/>
</dbReference>
<dbReference type="GO" id="GO:0004409">
    <property type="term" value="F:homoaconitate hydratase activity"/>
    <property type="evidence" value="ECO:0007669"/>
    <property type="project" value="UniProtKB-EC"/>
</dbReference>
<dbReference type="GO" id="GO:0046872">
    <property type="term" value="F:metal ion binding"/>
    <property type="evidence" value="ECO:0007669"/>
    <property type="project" value="UniProtKB-KW"/>
</dbReference>
<dbReference type="GO" id="GO:0019878">
    <property type="term" value="P:lysine biosynthetic process via aminoadipic acid"/>
    <property type="evidence" value="ECO:0007669"/>
    <property type="project" value="UniProtKB-UniPathway"/>
</dbReference>
<dbReference type="Gene3D" id="3.30.499.10">
    <property type="entry name" value="Aconitase, domain 3"/>
    <property type="match status" value="2"/>
</dbReference>
<dbReference type="Gene3D" id="3.20.19.10">
    <property type="entry name" value="Aconitase, domain 4"/>
    <property type="match status" value="1"/>
</dbReference>
<dbReference type="InterPro" id="IPR015931">
    <property type="entry name" value="Acnase/IPM_dHydase_lsu_aba_1/3"/>
</dbReference>
<dbReference type="InterPro" id="IPR001030">
    <property type="entry name" value="Acoase/IPM_deHydtase_lsu_aba"/>
</dbReference>
<dbReference type="InterPro" id="IPR015928">
    <property type="entry name" value="Aconitase/3IPM_dehydase_swvl"/>
</dbReference>
<dbReference type="InterPro" id="IPR018136">
    <property type="entry name" value="Aconitase_4Fe-4S_BS"/>
</dbReference>
<dbReference type="InterPro" id="IPR036008">
    <property type="entry name" value="Aconitase_4Fe-4S_dom"/>
</dbReference>
<dbReference type="InterPro" id="IPR000573">
    <property type="entry name" value="AconitaseA/IPMdHydase_ssu_swvl"/>
</dbReference>
<dbReference type="InterPro" id="IPR004418">
    <property type="entry name" value="Homoaconitase_mito"/>
</dbReference>
<dbReference type="InterPro" id="IPR050067">
    <property type="entry name" value="IPM_dehydratase_rel_enz"/>
</dbReference>
<dbReference type="NCBIfam" id="TIGR00139">
    <property type="entry name" value="h_aconitase"/>
    <property type="match status" value="1"/>
</dbReference>
<dbReference type="PANTHER" id="PTHR43822:SF2">
    <property type="entry name" value="HOMOACONITASE, MITOCHONDRIAL"/>
    <property type="match status" value="1"/>
</dbReference>
<dbReference type="PANTHER" id="PTHR43822">
    <property type="entry name" value="HOMOACONITASE, MITOCHONDRIAL-RELATED"/>
    <property type="match status" value="1"/>
</dbReference>
<dbReference type="Pfam" id="PF00330">
    <property type="entry name" value="Aconitase"/>
    <property type="match status" value="1"/>
</dbReference>
<dbReference type="Pfam" id="PF00694">
    <property type="entry name" value="Aconitase_C"/>
    <property type="match status" value="1"/>
</dbReference>
<dbReference type="PRINTS" id="PR00415">
    <property type="entry name" value="ACONITASE"/>
</dbReference>
<dbReference type="SUPFAM" id="SSF53732">
    <property type="entry name" value="Aconitase iron-sulfur domain"/>
    <property type="match status" value="1"/>
</dbReference>
<dbReference type="SUPFAM" id="SSF52016">
    <property type="entry name" value="LeuD/IlvD-like"/>
    <property type="match status" value="1"/>
</dbReference>
<dbReference type="PROSITE" id="PS00450">
    <property type="entry name" value="ACONITASE_1"/>
    <property type="match status" value="1"/>
</dbReference>
<dbReference type="PROSITE" id="PS01244">
    <property type="entry name" value="ACONITASE_2"/>
    <property type="match status" value="1"/>
</dbReference>
<reference key="1">
    <citation type="journal article" date="2005" name="Science">
        <title>The genome of the basidiomycetous yeast and human pathogen Cryptococcus neoformans.</title>
        <authorList>
            <person name="Loftus B.J."/>
            <person name="Fung E."/>
            <person name="Roncaglia P."/>
            <person name="Rowley D."/>
            <person name="Amedeo P."/>
            <person name="Bruno D."/>
            <person name="Vamathevan J."/>
            <person name="Miranda M."/>
            <person name="Anderson I.J."/>
            <person name="Fraser J.A."/>
            <person name="Allen J.E."/>
            <person name="Bosdet I.E."/>
            <person name="Brent M.R."/>
            <person name="Chiu R."/>
            <person name="Doering T.L."/>
            <person name="Donlin M.J."/>
            <person name="D'Souza C.A."/>
            <person name="Fox D.S."/>
            <person name="Grinberg V."/>
            <person name="Fu J."/>
            <person name="Fukushima M."/>
            <person name="Haas B.J."/>
            <person name="Huang J.C."/>
            <person name="Janbon G."/>
            <person name="Jones S.J.M."/>
            <person name="Koo H.L."/>
            <person name="Krzywinski M.I."/>
            <person name="Kwon-Chung K.J."/>
            <person name="Lengeler K.B."/>
            <person name="Maiti R."/>
            <person name="Marra M.A."/>
            <person name="Marra R.E."/>
            <person name="Mathewson C.A."/>
            <person name="Mitchell T.G."/>
            <person name="Pertea M."/>
            <person name="Riggs F.R."/>
            <person name="Salzberg S.L."/>
            <person name="Schein J.E."/>
            <person name="Shvartsbeyn A."/>
            <person name="Shin H."/>
            <person name="Shumway M."/>
            <person name="Specht C.A."/>
            <person name="Suh B.B."/>
            <person name="Tenney A."/>
            <person name="Utterback T.R."/>
            <person name="Wickes B.L."/>
            <person name="Wortman J.R."/>
            <person name="Wye N.H."/>
            <person name="Kronstad J.W."/>
            <person name="Lodge J.K."/>
            <person name="Heitman J."/>
            <person name="Davis R.W."/>
            <person name="Fraser C.M."/>
            <person name="Hyman R.W."/>
        </authorList>
    </citation>
    <scope>NUCLEOTIDE SEQUENCE [LARGE SCALE GENOMIC DNA]</scope>
    <source>
        <strain>JEC21 / ATCC MYA-565</strain>
    </source>
</reference>